<accession>P48481</accession>
<protein>
    <recommendedName>
        <fullName>Serine/threonine-protein phosphatase PP1 isozyme 2</fullName>
        <ecNumber>3.1.3.16</ecNumber>
    </recommendedName>
</protein>
<dbReference type="EC" id="3.1.3.16"/>
<dbReference type="EMBL" id="Z28632">
    <property type="protein sequence ID" value="CAA82264.1"/>
    <property type="molecule type" value="Genomic_DNA"/>
</dbReference>
<dbReference type="SMR" id="P48481"/>
<dbReference type="GO" id="GO:0005737">
    <property type="term" value="C:cytoplasm"/>
    <property type="evidence" value="ECO:0007669"/>
    <property type="project" value="TreeGrafter"/>
</dbReference>
<dbReference type="GO" id="GO:0005634">
    <property type="term" value="C:nucleus"/>
    <property type="evidence" value="ECO:0007669"/>
    <property type="project" value="TreeGrafter"/>
</dbReference>
<dbReference type="GO" id="GO:0046872">
    <property type="term" value="F:metal ion binding"/>
    <property type="evidence" value="ECO:0007669"/>
    <property type="project" value="UniProtKB-KW"/>
</dbReference>
<dbReference type="GO" id="GO:0004722">
    <property type="term" value="F:protein serine/threonine phosphatase activity"/>
    <property type="evidence" value="ECO:0007669"/>
    <property type="project" value="UniProtKB-EC"/>
</dbReference>
<dbReference type="CDD" id="cd07414">
    <property type="entry name" value="MPP_PP1_PPKL"/>
    <property type="match status" value="1"/>
</dbReference>
<dbReference type="FunFam" id="3.60.21.10:FF:000047">
    <property type="entry name" value="Serine/threonine-protein phosphatase"/>
    <property type="match status" value="1"/>
</dbReference>
<dbReference type="Gene3D" id="3.60.21.10">
    <property type="match status" value="1"/>
</dbReference>
<dbReference type="InterPro" id="IPR004843">
    <property type="entry name" value="Calcineurin-like_PHP_ApaH"/>
</dbReference>
<dbReference type="InterPro" id="IPR029052">
    <property type="entry name" value="Metallo-depent_PP-like"/>
</dbReference>
<dbReference type="InterPro" id="IPR050341">
    <property type="entry name" value="PP1_catalytic_subunit"/>
</dbReference>
<dbReference type="InterPro" id="IPR006186">
    <property type="entry name" value="Ser/Thr-sp_prot-phosphatase"/>
</dbReference>
<dbReference type="InterPro" id="IPR031675">
    <property type="entry name" value="STPPase_N"/>
</dbReference>
<dbReference type="PANTHER" id="PTHR11668">
    <property type="entry name" value="SERINE/THREONINE PROTEIN PHOSPHATASE"/>
    <property type="match status" value="1"/>
</dbReference>
<dbReference type="PANTHER" id="PTHR11668:SF300">
    <property type="entry name" value="SERINE_THREONINE-PROTEIN PHOSPHATASE"/>
    <property type="match status" value="1"/>
</dbReference>
<dbReference type="Pfam" id="PF00149">
    <property type="entry name" value="Metallophos"/>
    <property type="match status" value="1"/>
</dbReference>
<dbReference type="Pfam" id="PF16891">
    <property type="entry name" value="STPPase_N"/>
    <property type="match status" value="1"/>
</dbReference>
<dbReference type="PRINTS" id="PR00114">
    <property type="entry name" value="STPHPHTASE"/>
</dbReference>
<dbReference type="SMART" id="SM00156">
    <property type="entry name" value="PP2Ac"/>
    <property type="match status" value="1"/>
</dbReference>
<dbReference type="SUPFAM" id="SSF56300">
    <property type="entry name" value="Metallo-dependent phosphatases"/>
    <property type="match status" value="1"/>
</dbReference>
<dbReference type="PROSITE" id="PS00125">
    <property type="entry name" value="SER_THR_PHOSPHATASE"/>
    <property type="match status" value="1"/>
</dbReference>
<sequence length="319" mass="35924">MEESAVDDVIERLLEVRNNRPGKQVNLAEGEIRQLCLTAKDVFMSQPNLLELEAPIKICGDIHGQYTDLLRLFEYGGFPPEANYLFLGDYVDRGKQSLETICLLLAFKVKYPKNFFLLRGNHECASINRIYGFYDVCKRRYNIRLWKTFTDCFNCLPACALVDEKIICMHGGLSPELKSLDAIRHIPRPTDVPDTGLLCDLLWSDPDKDVAGWGENDRGVSYTFGPDTVTGFLQKHDLDLICRAHQVVEDGYEFFAKRQLVTLFSAPNYCGEFDNAGALMSVDDTLMCSFQILKPSEKKGKLLYGSGALAGPGRGTPRR</sequence>
<keyword id="KW-0378">Hydrolase</keyword>
<keyword id="KW-0464">Manganese</keyword>
<keyword id="KW-0479">Metal-binding</keyword>
<keyword id="KW-0904">Protein phosphatase</keyword>
<feature type="chain" id="PRO_0000058796" description="Serine/threonine-protein phosphatase PP1 isozyme 2">
    <location>
        <begin position="1"/>
        <end position="319"/>
    </location>
</feature>
<feature type="active site" description="Proton donor" evidence="1">
    <location>
        <position position="122"/>
    </location>
</feature>
<feature type="binding site" evidence="1">
    <location>
        <position position="61"/>
    </location>
    <ligand>
        <name>Mn(2+)</name>
        <dbReference type="ChEBI" id="CHEBI:29035"/>
        <label>1</label>
    </ligand>
</feature>
<feature type="binding site" evidence="1">
    <location>
        <position position="63"/>
    </location>
    <ligand>
        <name>Mn(2+)</name>
        <dbReference type="ChEBI" id="CHEBI:29035"/>
        <label>1</label>
    </ligand>
</feature>
<feature type="binding site" evidence="1">
    <location>
        <position position="89"/>
    </location>
    <ligand>
        <name>Mn(2+)</name>
        <dbReference type="ChEBI" id="CHEBI:29035"/>
        <label>1</label>
    </ligand>
</feature>
<feature type="binding site" evidence="1">
    <location>
        <position position="89"/>
    </location>
    <ligand>
        <name>Mn(2+)</name>
        <dbReference type="ChEBI" id="CHEBI:29035"/>
        <label>2</label>
    </ligand>
</feature>
<feature type="binding site" evidence="1">
    <location>
        <position position="121"/>
    </location>
    <ligand>
        <name>Mn(2+)</name>
        <dbReference type="ChEBI" id="CHEBI:29035"/>
        <label>2</label>
    </ligand>
</feature>
<feature type="binding site" evidence="1">
    <location>
        <position position="170"/>
    </location>
    <ligand>
        <name>Mn(2+)</name>
        <dbReference type="ChEBI" id="CHEBI:29035"/>
        <label>2</label>
    </ligand>
</feature>
<feature type="binding site" evidence="1">
    <location>
        <position position="245"/>
    </location>
    <ligand>
        <name>Mn(2+)</name>
        <dbReference type="ChEBI" id="CHEBI:29035"/>
        <label>2</label>
    </ligand>
</feature>
<name>PP12_ACEPE</name>
<evidence type="ECO:0000250" key="1"/>
<evidence type="ECO:0000305" key="2"/>
<organism>
    <name type="scientific">Acetabularia peniculus</name>
    <name type="common">Green alga</name>
    <name type="synonym">Polyphysa peniculus</name>
    <dbReference type="NCBI Taxonomy" id="35862"/>
    <lineage>
        <taxon>Eukaryota</taxon>
        <taxon>Viridiplantae</taxon>
        <taxon>Chlorophyta</taxon>
        <taxon>Ulvophyceae</taxon>
        <taxon>TCBD clade</taxon>
        <taxon>Dasycladales</taxon>
        <taxon>Polyphysaceae</taxon>
        <taxon>Acetabularia</taxon>
    </lineage>
</organism>
<reference key="1">
    <citation type="journal article" date="1995" name="Eur. J. Cell Biol.">
        <title>Protein phosphatase 2A, a potential regulator of actin dynamics and actin-based organelle motility in the green alga Acetabularia.</title>
        <authorList>
            <person name="Menzel D."/>
            <person name="Vugrek O."/>
            <person name="Frank S."/>
            <person name="Elsner-Menzel C."/>
        </authorList>
    </citation>
    <scope>NUCLEOTIDE SEQUENCE [GENOMIC DNA]</scope>
</reference>
<comment type="catalytic activity">
    <reaction>
        <text>O-phospho-L-seryl-[protein] + H2O = L-seryl-[protein] + phosphate</text>
        <dbReference type="Rhea" id="RHEA:20629"/>
        <dbReference type="Rhea" id="RHEA-COMP:9863"/>
        <dbReference type="Rhea" id="RHEA-COMP:11604"/>
        <dbReference type="ChEBI" id="CHEBI:15377"/>
        <dbReference type="ChEBI" id="CHEBI:29999"/>
        <dbReference type="ChEBI" id="CHEBI:43474"/>
        <dbReference type="ChEBI" id="CHEBI:83421"/>
        <dbReference type="EC" id="3.1.3.16"/>
    </reaction>
</comment>
<comment type="catalytic activity">
    <reaction>
        <text>O-phospho-L-threonyl-[protein] + H2O = L-threonyl-[protein] + phosphate</text>
        <dbReference type="Rhea" id="RHEA:47004"/>
        <dbReference type="Rhea" id="RHEA-COMP:11060"/>
        <dbReference type="Rhea" id="RHEA-COMP:11605"/>
        <dbReference type="ChEBI" id="CHEBI:15377"/>
        <dbReference type="ChEBI" id="CHEBI:30013"/>
        <dbReference type="ChEBI" id="CHEBI:43474"/>
        <dbReference type="ChEBI" id="CHEBI:61977"/>
        <dbReference type="EC" id="3.1.3.16"/>
    </reaction>
</comment>
<comment type="cofactor">
    <cofactor evidence="1">
        <name>Mn(2+)</name>
        <dbReference type="ChEBI" id="CHEBI:29035"/>
    </cofactor>
    <text evidence="1">Binds 2 manganese ions per subunit.</text>
</comment>
<comment type="similarity">
    <text evidence="2">Belongs to the PPP phosphatase family. PP-1 subfamily.</text>
</comment>
<proteinExistence type="inferred from homology"/>